<organism>
    <name type="scientific">Streptococcus pneumoniae (strain JJA)</name>
    <dbReference type="NCBI Taxonomy" id="488222"/>
    <lineage>
        <taxon>Bacteria</taxon>
        <taxon>Bacillati</taxon>
        <taxon>Bacillota</taxon>
        <taxon>Bacilli</taxon>
        <taxon>Lactobacillales</taxon>
        <taxon>Streptococcaceae</taxon>
        <taxon>Streptococcus</taxon>
    </lineage>
</organism>
<gene>
    <name evidence="1" type="primary">cinA</name>
    <name type="ordered locus">SPJ_1935</name>
</gene>
<reference key="1">
    <citation type="journal article" date="2010" name="Genome Biol.">
        <title>Structure and dynamics of the pan-genome of Streptococcus pneumoniae and closely related species.</title>
        <authorList>
            <person name="Donati C."/>
            <person name="Hiller N.L."/>
            <person name="Tettelin H."/>
            <person name="Muzzi A."/>
            <person name="Croucher N.J."/>
            <person name="Angiuoli S.V."/>
            <person name="Oggioni M."/>
            <person name="Dunning Hotopp J.C."/>
            <person name="Hu F.Z."/>
            <person name="Riley D.R."/>
            <person name="Covacci A."/>
            <person name="Mitchell T.J."/>
            <person name="Bentley S.D."/>
            <person name="Kilian M."/>
            <person name="Ehrlich G.D."/>
            <person name="Rappuoli R."/>
            <person name="Moxon E.R."/>
            <person name="Masignani V."/>
        </authorList>
    </citation>
    <scope>NUCLEOTIDE SEQUENCE [LARGE SCALE GENOMIC DNA]</scope>
    <source>
        <strain>JJA</strain>
    </source>
</reference>
<sequence>MKAEIIAVGTEILTGQIVNTNAQFLSEKLAEIGVDVYFQTAVGDNEVRLLSLLEIASQRSSLVILTGGLGPTEDDLTKQTLAKFLGKALVFDPQAQEKLDIFFALRPDYARTPNNERQAQIVEGAIPLPNETGLAVGGKLEVDGVTYVVLPGPPSELKPMVLNQLLPKLMTGSKLYSRVLRFFGIGESQLVTILADLIDNQIDPTLAPYAKTGEVTLRLSTKASSQEEANQALDILENQILDCQTFEGISLRDFCYGYGEETSLASIVVEELKRQGKTIAAAESLTAGLFQATVANFSGVSSIFKGGFVTYSLEEKSRMLDIPAKNLEEHGVVSEFTAQKMAEQARSKTQSDFGISLTGVAGPDSLEGHPVGTVFIGLAQEQGTEVIKVNIGGRSRADVRHIAVMHAFNLVRKALLSD</sequence>
<name>CINA_STRZJ</name>
<protein>
    <recommendedName>
        <fullName evidence="1">Putative competence-damage inducible protein</fullName>
    </recommendedName>
</protein>
<accession>C1CGM5</accession>
<comment type="similarity">
    <text evidence="1">Belongs to the CinA family.</text>
</comment>
<proteinExistence type="inferred from homology"/>
<evidence type="ECO:0000255" key="1">
    <source>
        <dbReference type="HAMAP-Rule" id="MF_00226"/>
    </source>
</evidence>
<feature type="chain" id="PRO_1000124993" description="Putative competence-damage inducible protein">
    <location>
        <begin position="1"/>
        <end position="418"/>
    </location>
</feature>
<dbReference type="EMBL" id="CP000919">
    <property type="protein sequence ID" value="ACO18728.1"/>
    <property type="molecule type" value="Genomic_DNA"/>
</dbReference>
<dbReference type="RefSeq" id="WP_000642709.1">
    <property type="nucleotide sequence ID" value="NC_012466.1"/>
</dbReference>
<dbReference type="SMR" id="C1CGM5"/>
<dbReference type="KEGG" id="sjj:SPJ_1935"/>
<dbReference type="HOGENOM" id="CLU_030805_9_3_9"/>
<dbReference type="Proteomes" id="UP000002206">
    <property type="component" value="Chromosome"/>
</dbReference>
<dbReference type="CDD" id="cd00885">
    <property type="entry name" value="cinA"/>
    <property type="match status" value="1"/>
</dbReference>
<dbReference type="Gene3D" id="3.30.70.2860">
    <property type="match status" value="1"/>
</dbReference>
<dbReference type="Gene3D" id="3.90.950.20">
    <property type="entry name" value="CinA-like"/>
    <property type="match status" value="1"/>
</dbReference>
<dbReference type="Gene3D" id="3.40.980.10">
    <property type="entry name" value="MoaB/Mog-like domain"/>
    <property type="match status" value="1"/>
</dbReference>
<dbReference type="HAMAP" id="MF_00226_B">
    <property type="entry name" value="CinA_B"/>
    <property type="match status" value="1"/>
</dbReference>
<dbReference type="InterPro" id="IPR050101">
    <property type="entry name" value="CinA"/>
</dbReference>
<dbReference type="InterPro" id="IPR036653">
    <property type="entry name" value="CinA-like_C"/>
</dbReference>
<dbReference type="InterPro" id="IPR008136">
    <property type="entry name" value="CinA_C"/>
</dbReference>
<dbReference type="InterPro" id="IPR041424">
    <property type="entry name" value="CinA_KH"/>
</dbReference>
<dbReference type="InterPro" id="IPR008135">
    <property type="entry name" value="Competence-induced_CinA"/>
</dbReference>
<dbReference type="InterPro" id="IPR036425">
    <property type="entry name" value="MoaB/Mog-like_dom_sf"/>
</dbReference>
<dbReference type="InterPro" id="IPR001453">
    <property type="entry name" value="MoaB/Mog_dom"/>
</dbReference>
<dbReference type="NCBIfam" id="TIGR00200">
    <property type="entry name" value="cinA_nterm"/>
    <property type="match status" value="1"/>
</dbReference>
<dbReference type="NCBIfam" id="TIGR00199">
    <property type="entry name" value="PncC_domain"/>
    <property type="match status" value="1"/>
</dbReference>
<dbReference type="NCBIfam" id="NF001813">
    <property type="entry name" value="PRK00549.1"/>
    <property type="match status" value="1"/>
</dbReference>
<dbReference type="PANTHER" id="PTHR13939">
    <property type="entry name" value="NICOTINAMIDE-NUCLEOTIDE AMIDOHYDROLASE PNCC"/>
    <property type="match status" value="1"/>
</dbReference>
<dbReference type="PANTHER" id="PTHR13939:SF0">
    <property type="entry name" value="NMN AMIDOHYDROLASE-LIKE PROTEIN YFAY"/>
    <property type="match status" value="1"/>
</dbReference>
<dbReference type="Pfam" id="PF02464">
    <property type="entry name" value="CinA"/>
    <property type="match status" value="1"/>
</dbReference>
<dbReference type="Pfam" id="PF18146">
    <property type="entry name" value="CinA_KH"/>
    <property type="match status" value="1"/>
</dbReference>
<dbReference type="Pfam" id="PF00994">
    <property type="entry name" value="MoCF_biosynth"/>
    <property type="match status" value="1"/>
</dbReference>
<dbReference type="PIRSF" id="PIRSF006728">
    <property type="entry name" value="CinA"/>
    <property type="match status" value="1"/>
</dbReference>
<dbReference type="SMART" id="SM00852">
    <property type="entry name" value="MoCF_biosynth"/>
    <property type="match status" value="1"/>
</dbReference>
<dbReference type="SUPFAM" id="SSF142433">
    <property type="entry name" value="CinA-like"/>
    <property type="match status" value="1"/>
</dbReference>
<dbReference type="SUPFAM" id="SSF53218">
    <property type="entry name" value="Molybdenum cofactor biosynthesis proteins"/>
    <property type="match status" value="1"/>
</dbReference>